<sequence length="215" mass="24696">MVKSRNTTTAHVHDVPRIMGGIKKLKLTKETAMAAGRKLKTLLAKVDAVEKVCVICMEPTYTKKTLAECDIEGGALRVTTMPCPTHYICDNCIRQEMEDKCPICRKDWPERRIIYGNEAKLYKYWLIDNDDIMILENNNDIDELTPEEEDHLLSDDESDNYVPRYTLDSLVEEVLSERSQMSNDRLMNDMIDNIAVNNAIDDDCIIIDDYIDLTI</sequence>
<protein>
    <recommendedName>
        <fullName>Putative zinc finger protein ORF121</fullName>
    </recommendedName>
</protein>
<reference key="1">
    <citation type="journal article" date="2005" name="J. Gen. Virol.">
        <title>A novel class of herpesvirus with bivalve hosts.</title>
        <authorList>
            <person name="Davison A.J."/>
            <person name="Trus B.L."/>
            <person name="Cheng N."/>
            <person name="Steven A.C."/>
            <person name="Watson M.S."/>
            <person name="Cunningham C."/>
            <person name="Le Deuff R.M."/>
            <person name="Renault T."/>
        </authorList>
    </citation>
    <scope>NUCLEOTIDE SEQUENCE [LARGE SCALE GENOMIC DNA]</scope>
</reference>
<accession>Q6R7A0</accession>
<organismHost>
    <name type="scientific">Magallana gigas</name>
    <name type="common">Pacific oyster</name>
    <name type="synonym">Crassostrea gigas</name>
    <dbReference type="NCBI Taxonomy" id="29159"/>
</organismHost>
<organismHost>
    <name type="scientific">Pecten maximus</name>
    <name type="common">King scallop</name>
    <name type="synonym">Pilgrim's clam</name>
    <dbReference type="NCBI Taxonomy" id="6579"/>
</organismHost>
<feature type="chain" id="PRO_0000385035" description="Putative zinc finger protein ORF121">
    <location>
        <begin position="1"/>
        <end position="215"/>
    </location>
</feature>
<feature type="zinc finger region" description="RING-type; degenerate" evidence="1">
    <location>
        <begin position="53"/>
        <end position="105"/>
    </location>
</feature>
<name>Y121_OSHVF</name>
<proteinExistence type="predicted"/>
<organism>
    <name type="scientific">Ostreid herpesvirus 1 (isolate France)</name>
    <name type="common">OsHV-1</name>
    <name type="synonym">Pacific oyster herpesvirus</name>
    <dbReference type="NCBI Taxonomy" id="654903"/>
    <lineage>
        <taxon>Viruses</taxon>
        <taxon>Duplodnaviria</taxon>
        <taxon>Heunggongvirae</taxon>
        <taxon>Peploviricota</taxon>
        <taxon>Herviviricetes</taxon>
        <taxon>Herpesvirales</taxon>
        <taxon>Malacoherpesviridae</taxon>
        <taxon>Ostreavirus</taxon>
        <taxon>Ostreavirus ostreidmalaco1</taxon>
        <taxon>Ostreid herpesvirus 1</taxon>
    </lineage>
</organism>
<keyword id="KW-0479">Metal-binding</keyword>
<keyword id="KW-1185">Reference proteome</keyword>
<keyword id="KW-0862">Zinc</keyword>
<keyword id="KW-0863">Zinc-finger</keyword>
<evidence type="ECO:0000255" key="1">
    <source>
        <dbReference type="PROSITE-ProRule" id="PRU00175"/>
    </source>
</evidence>
<dbReference type="EMBL" id="AY509253">
    <property type="protein sequence ID" value="AAS01010.1"/>
    <property type="molecule type" value="Genomic_DNA"/>
</dbReference>
<dbReference type="EMBL" id="AY509253">
    <property type="protein sequence ID" value="AAS01015.1"/>
    <property type="molecule type" value="Genomic_DNA"/>
</dbReference>
<dbReference type="RefSeq" id="YP_024663.1">
    <property type="nucleotide sequence ID" value="NC_005881.2"/>
</dbReference>
<dbReference type="RefSeq" id="YP_024668.1">
    <property type="nucleotide sequence ID" value="NC_005881.2"/>
</dbReference>
<dbReference type="KEGG" id="vg:2948142"/>
<dbReference type="KEGG" id="vg:2948165"/>
<dbReference type="Proteomes" id="UP000007021">
    <property type="component" value="Segment"/>
</dbReference>
<dbReference type="GO" id="GO:0008270">
    <property type="term" value="F:zinc ion binding"/>
    <property type="evidence" value="ECO:0007669"/>
    <property type="project" value="UniProtKB-KW"/>
</dbReference>
<dbReference type="Gene3D" id="3.30.40.10">
    <property type="entry name" value="Zinc/RING finger domain, C3HC4 (zinc finger)"/>
    <property type="match status" value="1"/>
</dbReference>
<dbReference type="InterPro" id="IPR001841">
    <property type="entry name" value="Znf_RING"/>
</dbReference>
<dbReference type="InterPro" id="IPR013083">
    <property type="entry name" value="Znf_RING/FYVE/PHD"/>
</dbReference>
<dbReference type="SUPFAM" id="SSF57850">
    <property type="entry name" value="RING/U-box"/>
    <property type="match status" value="1"/>
</dbReference>
<dbReference type="PROSITE" id="PS50089">
    <property type="entry name" value="ZF_RING_2"/>
    <property type="match status" value="1"/>
</dbReference>
<gene>
    <name type="ORF">ORF121</name>
</gene>